<proteinExistence type="evidence at protein level"/>
<reference key="1">
    <citation type="journal article" date="1994" name="J. Biol. Chem.">
        <title>Cloning and functional expression of a urea transporter from human bone marrow cells.</title>
        <authorList>
            <person name="Olives B."/>
            <person name="Neau P."/>
            <person name="Bailly P."/>
            <person name="Hediger M.A."/>
            <person name="Rousselet G."/>
            <person name="Cartron J.-P."/>
            <person name="Ripoche P."/>
        </authorList>
    </citation>
    <scope>NUCLEOTIDE SEQUENCE [MRNA] (ISOFORM 1)</scope>
    <scope>FUNCTION</scope>
    <scope>TRANSPORTER ACTIVITY</scope>
    <scope>ACTIVITY REGULATION</scope>
    <scope>TISSUE SPECIFICITY</scope>
    <scope>VARIANT LYS-44</scope>
    <source>
        <tissue>Bone marrow</tissue>
    </source>
</reference>
<reference key="2">
    <citation type="journal article" date="1995" name="Mol. Biol. Cell">
        <title>RACH2, a novel human gene that complements a fission yeast cell cycle checkpoint mutation.</title>
        <authorList>
            <person name="Davey S."/>
            <person name="Beach D."/>
        </authorList>
    </citation>
    <scope>NUCLEOTIDE SEQUENCE [MRNA] (ISOFORM 1)</scope>
</reference>
<reference key="3">
    <citation type="journal article" date="1997" name="Hum. Mol. Genet.">
        <title>The molecular basis of the Kidd blood group polymorphism and its lack of association with type 1 diabetes susceptibility.</title>
        <authorList>
            <person name="Olives B."/>
            <person name="Merriman M."/>
            <person name="Bailly P."/>
            <person name="Bain S."/>
            <person name="Barnett A."/>
            <person name="Todd T."/>
            <person name="Cartron J.-P."/>
            <person name="Merriman T."/>
        </authorList>
    </citation>
    <scope>NUCLEOTIDE SEQUENCE [MRNA] (ISOFORM 1)</scope>
    <scope>POLYMORPHISM</scope>
    <scope>VARIANT JK(B) ASN-280</scope>
</reference>
<reference key="4">
    <citation type="journal article" date="1999" name="J. Biol. Chem.">
        <title>At physiological expression levels, the Kidd blood group/urea transporter protein is not a water channel.</title>
        <authorList>
            <person name="Sidoux-Walter F."/>
            <person name="Lucien N."/>
            <person name="Olives B."/>
            <person name="Gobin R."/>
            <person name="Rousselet G."/>
            <person name="Kamsteeg E.J."/>
            <person name="Ripoche P."/>
            <person name="Deen P.M.T."/>
            <person name="Cartron J.-P."/>
            <person name="Bailly P."/>
        </authorList>
    </citation>
    <scope>NUCLEOTIDE SEQUENCE [MRNA] (ISOFORM 1)</scope>
    <scope>FUNCTION</scope>
    <scope>TRANSPORTER ACTIVITY</scope>
    <scope>SUBCELLULAR LOCATION</scope>
    <scope>ACTIVITY REGULATION</scope>
    <source>
        <tissue>Blood</tissue>
    </source>
</reference>
<reference key="5">
    <citation type="journal article" date="2004" name="Nat. Genet.">
        <title>Complete sequencing and characterization of 21,243 full-length human cDNAs.</title>
        <authorList>
            <person name="Ota T."/>
            <person name="Suzuki Y."/>
            <person name="Nishikawa T."/>
            <person name="Otsuki T."/>
            <person name="Sugiyama T."/>
            <person name="Irie R."/>
            <person name="Wakamatsu A."/>
            <person name="Hayashi K."/>
            <person name="Sato H."/>
            <person name="Nagai K."/>
            <person name="Kimura K."/>
            <person name="Makita H."/>
            <person name="Sekine M."/>
            <person name="Obayashi M."/>
            <person name="Nishi T."/>
            <person name="Shibahara T."/>
            <person name="Tanaka T."/>
            <person name="Ishii S."/>
            <person name="Yamamoto J."/>
            <person name="Saito K."/>
            <person name="Kawai Y."/>
            <person name="Isono Y."/>
            <person name="Nakamura Y."/>
            <person name="Nagahari K."/>
            <person name="Murakami K."/>
            <person name="Yasuda T."/>
            <person name="Iwayanagi T."/>
            <person name="Wagatsuma M."/>
            <person name="Shiratori A."/>
            <person name="Sudo H."/>
            <person name="Hosoiri T."/>
            <person name="Kaku Y."/>
            <person name="Kodaira H."/>
            <person name="Kondo H."/>
            <person name="Sugawara M."/>
            <person name="Takahashi M."/>
            <person name="Kanda K."/>
            <person name="Yokoi T."/>
            <person name="Furuya T."/>
            <person name="Kikkawa E."/>
            <person name="Omura Y."/>
            <person name="Abe K."/>
            <person name="Kamihara K."/>
            <person name="Katsuta N."/>
            <person name="Sato K."/>
            <person name="Tanikawa M."/>
            <person name="Yamazaki M."/>
            <person name="Ninomiya K."/>
            <person name="Ishibashi T."/>
            <person name="Yamashita H."/>
            <person name="Murakawa K."/>
            <person name="Fujimori K."/>
            <person name="Tanai H."/>
            <person name="Kimata M."/>
            <person name="Watanabe M."/>
            <person name="Hiraoka S."/>
            <person name="Chiba Y."/>
            <person name="Ishida S."/>
            <person name="Ono Y."/>
            <person name="Takiguchi S."/>
            <person name="Watanabe S."/>
            <person name="Yosida M."/>
            <person name="Hotuta T."/>
            <person name="Kusano J."/>
            <person name="Kanehori K."/>
            <person name="Takahashi-Fujii A."/>
            <person name="Hara H."/>
            <person name="Tanase T.-O."/>
            <person name="Nomura Y."/>
            <person name="Togiya S."/>
            <person name="Komai F."/>
            <person name="Hara R."/>
            <person name="Takeuchi K."/>
            <person name="Arita M."/>
            <person name="Imose N."/>
            <person name="Musashino K."/>
            <person name="Yuuki H."/>
            <person name="Oshima A."/>
            <person name="Sasaki N."/>
            <person name="Aotsuka S."/>
            <person name="Yoshikawa Y."/>
            <person name="Matsunawa H."/>
            <person name="Ichihara T."/>
            <person name="Shiohata N."/>
            <person name="Sano S."/>
            <person name="Moriya S."/>
            <person name="Momiyama H."/>
            <person name="Satoh N."/>
            <person name="Takami S."/>
            <person name="Terashima Y."/>
            <person name="Suzuki O."/>
            <person name="Nakagawa S."/>
            <person name="Senoh A."/>
            <person name="Mizoguchi H."/>
            <person name="Goto Y."/>
            <person name="Shimizu F."/>
            <person name="Wakebe H."/>
            <person name="Hishigaki H."/>
            <person name="Watanabe T."/>
            <person name="Sugiyama A."/>
            <person name="Takemoto M."/>
            <person name="Kawakami B."/>
            <person name="Yamazaki M."/>
            <person name="Watanabe K."/>
            <person name="Kumagai A."/>
            <person name="Itakura S."/>
            <person name="Fukuzumi Y."/>
            <person name="Fujimori Y."/>
            <person name="Komiyama M."/>
            <person name="Tashiro H."/>
            <person name="Tanigami A."/>
            <person name="Fujiwara T."/>
            <person name="Ono T."/>
            <person name="Yamada K."/>
            <person name="Fujii Y."/>
            <person name="Ozaki K."/>
            <person name="Hirao M."/>
            <person name="Ohmori Y."/>
            <person name="Kawabata A."/>
            <person name="Hikiji T."/>
            <person name="Kobatake N."/>
            <person name="Inagaki H."/>
            <person name="Ikema Y."/>
            <person name="Okamoto S."/>
            <person name="Okitani R."/>
            <person name="Kawakami T."/>
            <person name="Noguchi S."/>
            <person name="Itoh T."/>
            <person name="Shigeta K."/>
            <person name="Senba T."/>
            <person name="Matsumura K."/>
            <person name="Nakajima Y."/>
            <person name="Mizuno T."/>
            <person name="Morinaga M."/>
            <person name="Sasaki M."/>
            <person name="Togashi T."/>
            <person name="Oyama M."/>
            <person name="Hata H."/>
            <person name="Watanabe M."/>
            <person name="Komatsu T."/>
            <person name="Mizushima-Sugano J."/>
            <person name="Satoh T."/>
            <person name="Shirai Y."/>
            <person name="Takahashi Y."/>
            <person name="Nakagawa K."/>
            <person name="Okumura K."/>
            <person name="Nagase T."/>
            <person name="Nomura N."/>
            <person name="Kikuchi H."/>
            <person name="Masuho Y."/>
            <person name="Yamashita R."/>
            <person name="Nakai K."/>
            <person name="Yada T."/>
            <person name="Nakamura Y."/>
            <person name="Ohara O."/>
            <person name="Isogai T."/>
            <person name="Sugano S."/>
        </authorList>
    </citation>
    <scope>NUCLEOTIDE SEQUENCE [LARGE SCALE MRNA] (ISOFORMS 1 AND 2)</scope>
    <scope>VARIANT LYS-44</scope>
    <source>
        <tissue>Artery smooth muscle</tissue>
        <tissue>Brain cortex</tissue>
        <tissue>Caudate nucleus</tissue>
    </source>
</reference>
<reference key="6">
    <citation type="submission" date="2005-02" db="EMBL/GenBank/DDBJ databases">
        <authorList>
            <consortium name="SeattleSNPs variation discovery resource"/>
        </authorList>
    </citation>
    <scope>NUCLEOTIDE SEQUENCE [GENOMIC DNA]</scope>
    <scope>VARIANTS LYS-44 AND ASN-280</scope>
</reference>
<reference key="7">
    <citation type="journal article" date="2004" name="Genome Res.">
        <title>The status, quality, and expansion of the NIH full-length cDNA project: the Mammalian Gene Collection (MGC).</title>
        <authorList>
            <consortium name="The MGC Project Team"/>
        </authorList>
    </citation>
    <scope>NUCLEOTIDE SEQUENCE [LARGE SCALE MRNA] (ISOFORM 1)</scope>
    <scope>VARIANTS VAL-167 AND ASN-280</scope>
    <source>
        <tissue>Colon</tissue>
    </source>
</reference>
<reference key="8">
    <citation type="submission" date="2009-08" db="EMBL/GenBank/DDBJ databases">
        <title>Missense mutations that result in serological JKnull phenotypes.</title>
        <authorList>
            <person name="Posadas J.B."/>
            <person name="Shnyreva M."/>
            <person name="Gaur P."/>
            <person name="Nakaya S."/>
            <person name="Devanaboina M."/>
            <person name="Teramura G."/>
            <person name="Haile A."/>
            <person name="Gaur L.K."/>
        </authorList>
    </citation>
    <scope>NUCLEOTIDE SEQUENCE [MRNA] OF 1-381</scope>
    <scope>VARIANT ASN-280</scope>
</reference>
<reference key="9">
    <citation type="journal article" date="2008" name="Transfusion">
        <title>Erythroid urea transporter deficiency due to novel JKnull alleles.</title>
        <authorList>
            <person name="Wester E.S."/>
            <person name="Johnson S.T."/>
            <person name="Copeland T."/>
            <person name="Malde R."/>
            <person name="Lee E."/>
            <person name="Storry J.R."/>
            <person name="Olsson M.L."/>
        </authorList>
    </citation>
    <scope>NUCLEOTIDE SEQUENCE [GENOMIC DNA] OF 52-113; 222-257 AND 317-332</scope>
    <scope>VARIANT JK(NULL) MET-319</scope>
</reference>
<reference key="10">
    <citation type="journal article" date="1995" name="J. Biol. Chem.">
        <title>Kidd blood group and urea transport function of human erythrocytes are carried by the same protein.</title>
        <authorList>
            <person name="Olives B."/>
            <person name="Mattei M.G."/>
            <person name="Huet M."/>
            <person name="Neau P."/>
            <person name="Martial S."/>
            <person name="Cartron J.P."/>
            <person name="Bailly P."/>
        </authorList>
    </citation>
    <scope>FUNCTION</scope>
    <scope>TRANSPORTER ACTIVITY</scope>
    <scope>SUBCELLULAR LOCATION</scope>
</reference>
<reference key="11">
    <citation type="journal article" date="1996" name="Am. J. Physiol.">
        <title>Functional differentiation of the human red blood cell and kidney urea transporters.</title>
        <authorList>
            <person name="Martial S."/>
            <person name="Olives B."/>
            <person name="Abrami L."/>
            <person name="Couriaud C."/>
            <person name="Bailly P."/>
            <person name="You G."/>
            <person name="Hediger M.A."/>
            <person name="Cartron J.P."/>
            <person name="Ripoche P."/>
            <person name="Rousselet G."/>
        </authorList>
    </citation>
    <scope>FUNCTION</scope>
    <scope>TRANSPORTER ACTIVITY</scope>
    <scope>ACTIVITY REGULATION</scope>
</reference>
<reference key="12">
    <citation type="journal article" date="2013" name="Biochim. Biophys. Acta">
        <title>Stomatin interacts with GLUT1/SLC2A1, band 3/SLC4A1, and aquaporin-1 in human erythrocyte membrane domains.</title>
        <authorList>
            <person name="Rungaldier S."/>
            <person name="Oberwagner W."/>
            <person name="Salzer U."/>
            <person name="Csaszar E."/>
            <person name="Prohaska R."/>
        </authorList>
    </citation>
    <scope>SUBCELLULAR LOCATION</scope>
    <scope>TISSUE SPECIFICITY</scope>
    <scope>IDENTIFICATION IN A COMPLEX WITH STOM</scope>
</reference>
<reference key="13">
    <citation type="journal article" date="2000" name="Blood">
        <title>Molecular heterogeneity of the Jk(null) phenotype: expression analysis of the Jk(S291P) mutation found in Finns.</title>
        <authorList>
            <person name="Sidoux-Walter F."/>
            <person name="Lucien N."/>
            <person name="Nissinen R."/>
            <person name="Sistonen P."/>
            <person name="Henry S."/>
            <person name="Moulds J."/>
            <person name="Cartron J.-P."/>
            <person name="Bailly P."/>
        </authorList>
    </citation>
    <scope>VARIANT JK(NULL) PRO-291</scope>
</reference>
<reference key="14">
    <citation type="journal article" date="2000" name="Transfusion">
        <title>Genomic characterization of the Kidd blood group gene: different molecular basis of the Jk(a-b-) phenotype in Polynesians and Finns.</title>
        <authorList>
            <person name="Irshaid N.M."/>
            <person name="Henry S.M."/>
            <person name="Olsson M.L."/>
        </authorList>
    </citation>
    <scope>VARIANT JK(NULL) PRO-291</scope>
</reference>
<reference key="15">
    <citation type="journal article" date="2009" name="Transfusion">
        <title>Two novel Jk(null) alleles derived from 222C&gt;A in Exon 5 and 896G&gt;A in Exon 9 of the JK gene.</title>
        <authorList>
            <person name="Liu H.M."/>
            <person name="Lin J.S."/>
            <person name="Chen P.S."/>
            <person name="Lyou J.Y."/>
            <person name="Chen Y.J."/>
            <person name="Tzeng C.H."/>
        </authorList>
    </citation>
    <scope>VARIANTS JK(NULL) LYS-74; VAL-167 AND GLU-299</scope>
</reference>
<name>UT1_HUMAN</name>
<feature type="chain" id="PRO_0000065737" description="Urea transporter 1">
    <location>
        <begin position="1"/>
        <end position="389"/>
    </location>
</feature>
<feature type="transmembrane region" description="Helical" evidence="3">
    <location>
        <begin position="53"/>
        <end position="73"/>
    </location>
</feature>
<feature type="transmembrane region" description="Helical" evidence="3">
    <location>
        <begin position="91"/>
        <end position="110"/>
    </location>
</feature>
<feature type="transmembrane region" description="Helical" evidence="3">
    <location>
        <begin position="116"/>
        <end position="136"/>
    </location>
</feature>
<feature type="transmembrane region" description="Helical" evidence="3">
    <location>
        <begin position="143"/>
        <end position="163"/>
    </location>
</feature>
<feature type="transmembrane region" description="Helical" evidence="3">
    <location>
        <begin position="173"/>
        <end position="193"/>
    </location>
</feature>
<feature type="transmembrane region" description="Helical" evidence="3">
    <location>
        <begin position="242"/>
        <end position="262"/>
    </location>
</feature>
<feature type="transmembrane region" description="Helical" evidence="3">
    <location>
        <begin position="281"/>
        <end position="301"/>
    </location>
</feature>
<feature type="transmembrane region" description="Helical" evidence="3">
    <location>
        <begin position="310"/>
        <end position="330"/>
    </location>
</feature>
<feature type="transmembrane region" description="Helical" evidence="3">
    <location>
        <begin position="333"/>
        <end position="353"/>
    </location>
</feature>
<feature type="site" description="Important for channel permeability" evidence="1">
    <location>
        <position position="339"/>
    </location>
</feature>
<feature type="glycosylation site" description="N-linked (GlcNAc...) asparagine" evidence="3">
    <location>
        <position position="211"/>
    </location>
</feature>
<feature type="splice variant" id="VSP_041573" description="In isoform 2." evidence="18">
    <original>M</original>
    <variation>MNGRSLIGGAGDARHGPVWKDPFGTKAGDAARRGIARLSLALADGSQEQEPEEEIAM</variation>
    <location>
        <position position="1"/>
    </location>
</feature>
<feature type="sequence variant" id="VAR_022319" description="In dbSNP:rs2298720." evidence="7 13 16">
    <original>E</original>
    <variation>K</variation>
    <location>
        <position position="44"/>
    </location>
</feature>
<feature type="sequence variant" id="VAR_065466" description="In Jk(null); dbSNP:rs749037771." evidence="10">
    <original>N</original>
    <variation>K</variation>
    <location>
        <position position="74"/>
    </location>
</feature>
<feature type="sequence variant" id="VAR_051483" description="In Jk(null); dbSNP:rs2298719." evidence="8 10">
    <original>M</original>
    <variation>V</variation>
    <location>
        <position position="167"/>
    </location>
</feature>
<feature type="sequence variant" id="VAR_051484" description="In dbSNP:rs9948825.">
    <original>W</original>
    <variation>R</variation>
    <location>
        <position position="171"/>
    </location>
</feature>
<feature type="sequence variant" id="VAR_005669" description="In Jk(b); dbSNP:rs1058396." evidence="8 15 16 17">
    <original>D</original>
    <variation>N</variation>
    <location>
        <position position="280"/>
    </location>
</feature>
<feature type="sequence variant" id="VAR_013752" description="In Jk(null); dbSNP:rs78242949." evidence="5 6">
    <original>S</original>
    <variation>P</variation>
    <location>
        <position position="291"/>
    </location>
</feature>
<feature type="sequence variant" id="VAR_065467" description="In Jk(null); dbSNP:rs538368217." evidence="10">
    <original>G</original>
    <variation>E</variation>
    <location>
        <position position="299"/>
    </location>
</feature>
<feature type="sequence variant" id="VAR_065468" description="In Jk(null); dbSNP:rs565898944." evidence="9">
    <original>T</original>
    <variation>M</variation>
    <location>
        <position position="319"/>
    </location>
</feature>
<feature type="sequence conflict" description="In Ref. 5; BAF82297." evidence="19" ref="5">
    <original>L</original>
    <variation>M</variation>
    <location>
        <position position="49"/>
    </location>
</feature>
<feature type="sequence conflict" description="In Ref. 8; ACV91713." evidence="19" ref="8">
    <original>R</original>
    <variation>Q</variation>
    <location>
        <position position="64"/>
    </location>
</feature>
<feature type="sequence conflict" description="In Ref. 1." evidence="19" ref="1">
    <original>G</original>
    <variation>GVG</variation>
    <location>
        <position position="231"/>
    </location>
</feature>
<feature type="helix" evidence="20">
    <location>
        <begin position="32"/>
        <end position="38"/>
    </location>
</feature>
<feature type="helix" evidence="20">
    <location>
        <begin position="43"/>
        <end position="49"/>
    </location>
</feature>
<feature type="helix" evidence="20">
    <location>
        <begin position="54"/>
        <end position="67"/>
    </location>
</feature>
<feature type="helix" evidence="20">
    <location>
        <begin position="68"/>
        <end position="70"/>
    </location>
</feature>
<feature type="helix" evidence="20">
    <location>
        <begin position="75"/>
        <end position="88"/>
    </location>
</feature>
<feature type="helix" evidence="20">
    <location>
        <begin position="90"/>
        <end position="109"/>
    </location>
</feature>
<feature type="helix" evidence="20">
    <location>
        <begin position="114"/>
        <end position="118"/>
    </location>
</feature>
<feature type="turn" evidence="20">
    <location>
        <begin position="119"/>
        <end position="123"/>
    </location>
</feature>
<feature type="helix" evidence="20">
    <location>
        <begin position="124"/>
        <end position="136"/>
    </location>
</feature>
<feature type="strand" evidence="20">
    <location>
        <begin position="137"/>
        <end position="139"/>
    </location>
</feature>
<feature type="helix" evidence="20">
    <location>
        <begin position="144"/>
        <end position="146"/>
    </location>
</feature>
<feature type="helix" evidence="20">
    <location>
        <begin position="147"/>
        <end position="168"/>
    </location>
</feature>
<feature type="helix" evidence="20">
    <location>
        <begin position="169"/>
        <end position="171"/>
    </location>
</feature>
<feature type="helix" evidence="20">
    <location>
        <begin position="178"/>
        <end position="191"/>
    </location>
</feature>
<feature type="strand" evidence="20">
    <location>
        <begin position="196"/>
        <end position="198"/>
    </location>
</feature>
<feature type="helix" evidence="20">
    <location>
        <begin position="214"/>
        <end position="216"/>
    </location>
</feature>
<feature type="helix" evidence="20">
    <location>
        <begin position="219"/>
        <end position="231"/>
    </location>
</feature>
<feature type="helix" evidence="20">
    <location>
        <begin position="232"/>
        <end position="234"/>
    </location>
</feature>
<feature type="helix" evidence="20">
    <location>
        <begin position="239"/>
        <end position="252"/>
    </location>
</feature>
<feature type="helix" evidence="20">
    <location>
        <begin position="254"/>
        <end position="273"/>
    </location>
</feature>
<feature type="helix" evidence="20">
    <location>
        <begin position="278"/>
        <end position="282"/>
    </location>
</feature>
<feature type="turn" evidence="20">
    <location>
        <begin position="283"/>
        <end position="287"/>
    </location>
</feature>
<feature type="helix" evidence="20">
    <location>
        <begin position="288"/>
        <end position="297"/>
    </location>
</feature>
<feature type="turn" evidence="20">
    <location>
        <begin position="298"/>
        <end position="300"/>
    </location>
</feature>
<feature type="helix" evidence="20">
    <location>
        <begin position="306"/>
        <end position="331"/>
    </location>
</feature>
<feature type="turn" evidence="20">
    <location>
        <begin position="332"/>
        <end position="334"/>
    </location>
</feature>
<feature type="helix" evidence="20">
    <location>
        <begin position="340"/>
        <end position="351"/>
    </location>
</feature>
<feature type="helix" evidence="20">
    <location>
        <begin position="364"/>
        <end position="366"/>
    </location>
</feature>
<feature type="helix" evidence="20">
    <location>
        <begin position="370"/>
        <end position="384"/>
    </location>
</feature>
<protein>
    <recommendedName>
        <fullName>Urea transporter 1</fullName>
    </recommendedName>
    <alternativeName>
        <fullName>Solute carrier family 14 member 1</fullName>
    </alternativeName>
    <alternativeName>
        <fullName>Urea transporter, erythrocyte</fullName>
    </alternativeName>
</protein>
<keyword id="KW-0002">3D-structure</keyword>
<keyword id="KW-0025">Alternative splicing</keyword>
<keyword id="KW-0095">Blood group antigen</keyword>
<keyword id="KW-1003">Cell membrane</keyword>
<keyword id="KW-0325">Glycoprotein</keyword>
<keyword id="KW-0472">Membrane</keyword>
<keyword id="KW-1267">Proteomics identification</keyword>
<keyword id="KW-1185">Reference proteome</keyword>
<keyword id="KW-0812">Transmembrane</keyword>
<keyword id="KW-1133">Transmembrane helix</keyword>
<keyword id="KW-0813">Transport</keyword>
<comment type="function">
    <text evidence="2 4 12 13 14">Mediates the transport of urea driven by a concentration gradient across the cell membrane of erythrocytes (PubMed:10514515, PubMed:7797558, PubMed:7989337, PubMed:8997401). Also mediates the transport of urea across the cell membrane of the renal inner medullary collecting duct which is critical to the urinary concentrating mechanism (By similarity). Facilitates water transport in erythrocytes (By similarity).</text>
</comment>
<comment type="catalytic activity">
    <reaction evidence="4 12 13 14">
        <text>urea(in) = urea(out)</text>
        <dbReference type="Rhea" id="RHEA:32799"/>
        <dbReference type="ChEBI" id="CHEBI:16199"/>
    </reaction>
</comment>
<comment type="activity regulation">
    <text evidence="4 13 14">Inhibited by phloretin and para-chloromercuribenzene sulfonate.</text>
</comment>
<comment type="subunit">
    <text evidence="1 11">Homotrimer; each subunit contains a pore through which urea permeates (By similarity). Identified in a complex with STOM (PubMed:23219802).</text>
</comment>
<comment type="interaction">
    <interactant intactId="EBI-19141793">
        <id>Q13336-2</id>
    </interactant>
    <interactant intactId="EBI-8648738">
        <id>Q8WVV5</id>
        <label>BTN2A2</label>
    </interactant>
    <organismsDiffer>false</organismsDiffer>
    <experiments>3</experiments>
</comment>
<comment type="interaction">
    <interactant intactId="EBI-19141793">
        <id>Q13336-2</id>
    </interactant>
    <interactant intactId="EBI-3385283">
        <id>Q9Y3D6</id>
        <label>FIS1</label>
    </interactant>
    <organismsDiffer>false</organismsDiffer>
    <experiments>3</experiments>
</comment>
<comment type="interaction">
    <interactant intactId="EBI-19141793">
        <id>Q13336-2</id>
    </interactant>
    <interactant intactId="EBI-11991950">
        <id>Q8WWP7</id>
        <label>GIMAP1</label>
    </interactant>
    <organismsDiffer>false</organismsDiffer>
    <experiments>3</experiments>
</comment>
<comment type="interaction">
    <interactant intactId="EBI-19141793">
        <id>Q13336-2</id>
    </interactant>
    <interactant intactId="EBI-8449636">
        <id>P30301</id>
        <label>MIP</label>
    </interactant>
    <organismsDiffer>false</organismsDiffer>
    <experiments>3</experiments>
</comment>
<comment type="interaction">
    <interactant intactId="EBI-19141793">
        <id>Q13336-2</id>
    </interactant>
    <interactant intactId="EBI-10244780">
        <id>Q5QGT7</id>
        <label>RTP2</label>
    </interactant>
    <organismsDiffer>false</organismsDiffer>
    <experiments>3</experiments>
</comment>
<comment type="interaction">
    <interactant intactId="EBI-19141793">
        <id>Q13336-2</id>
    </interactant>
    <interactant intactId="EBI-11957067">
        <id>Q6UX34</id>
        <label>SNORC</label>
    </interactant>
    <organismsDiffer>false</organismsDiffer>
    <experiments>3</experiments>
</comment>
<comment type="interaction">
    <interactant intactId="EBI-19141793">
        <id>Q13336-2</id>
    </interactant>
    <interactant intactId="EBI-12200293">
        <id>P0DN84</id>
        <label>STRIT1</label>
    </interactant>
    <organismsDiffer>false</organismsDiffer>
    <experiments>3</experiments>
</comment>
<comment type="interaction">
    <interactant intactId="EBI-19141793">
        <id>Q13336-2</id>
    </interactant>
    <interactant intactId="EBI-311394">
        <id>Q9C0I4</id>
        <label>THSD7B</label>
    </interactant>
    <organismsDiffer>false</organismsDiffer>
    <experiments>3</experiments>
</comment>
<comment type="interaction">
    <interactant intactId="EBI-19141793">
        <id>Q13336-2</id>
    </interactant>
    <interactant intactId="EBI-12111910">
        <id>Q5BJF2</id>
        <label>TMEM97</label>
    </interactant>
    <organismsDiffer>false</organismsDiffer>
    <experiments>3</experiments>
</comment>
<comment type="subcellular location">
    <subcellularLocation>
        <location evidence="4 11 12">Cell membrane</location>
        <topology evidence="3">Multi-pass membrane protein</topology>
    </subcellularLocation>
    <subcellularLocation>
        <location evidence="2">Basolateral cell membrane</location>
        <topology evidence="3">Multi-pass membrane protein</topology>
    </subcellularLocation>
    <text evidence="2">Restricted to the basolateral membrane in various portions of the urothelium.</text>
</comment>
<comment type="alternative products">
    <event type="alternative splicing"/>
    <isoform>
        <id>Q13336-1</id>
        <name>1</name>
        <sequence type="displayed"/>
    </isoform>
    <isoform>
        <id>Q13336-2</id>
        <name>2</name>
        <sequence type="described" ref="VSP_041573"/>
    </isoform>
</comment>
<comment type="tissue specificity">
    <text evidence="11 13">Detected in erythrocytes (at protein level) (PubMed:23219802). Expressed in spleen erythroblasts and tumoral kidney (PubMed:7989337).</text>
</comment>
<comment type="polymorphism">
    <text>SLC14A1 is responsible for the Kidd blood group system (JK) [MIM:111000]. JK is defined by 2 alleles, JK*01 and JK*02 that give rise to Jk(a) and Jk(b) antigens respectively. The molecular basis of the Jk(a)/Jk(b) antigens is a single variation in position 280; Asp-280 corresponds to Jk(a) and Asn-280 to Jk(b). Some individuals carry silenced JK*01 and JK*02 alleles, designated JK*01N or JK*02N. They results in a Jk(null) phenotype associated with reduced urea permeability of red blood cells. Jk(null) is not associated with any obvious clinical syndrome except for a urine concentration defect.</text>
</comment>
<comment type="similarity">
    <text evidence="19">Belongs to the urea transporter family.</text>
</comment>
<evidence type="ECO:0000250" key="1">
    <source>
        <dbReference type="UniProtKB" id="Q5QF96"/>
    </source>
</evidence>
<evidence type="ECO:0000250" key="2">
    <source>
        <dbReference type="UniProtKB" id="Q8VHL0"/>
    </source>
</evidence>
<evidence type="ECO:0000255" key="3"/>
<evidence type="ECO:0000269" key="4">
    <source>
    </source>
</evidence>
<evidence type="ECO:0000269" key="5">
    <source>
    </source>
</evidence>
<evidence type="ECO:0000269" key="6">
    <source>
    </source>
</evidence>
<evidence type="ECO:0000269" key="7">
    <source>
    </source>
</evidence>
<evidence type="ECO:0000269" key="8">
    <source>
    </source>
</evidence>
<evidence type="ECO:0000269" key="9">
    <source>
    </source>
</evidence>
<evidence type="ECO:0000269" key="10">
    <source>
    </source>
</evidence>
<evidence type="ECO:0000269" key="11">
    <source>
    </source>
</evidence>
<evidence type="ECO:0000269" key="12">
    <source>
    </source>
</evidence>
<evidence type="ECO:0000269" key="13">
    <source>
    </source>
</evidence>
<evidence type="ECO:0000269" key="14">
    <source>
    </source>
</evidence>
<evidence type="ECO:0000269" key="15">
    <source>
    </source>
</evidence>
<evidence type="ECO:0000269" key="16">
    <source ref="6"/>
</evidence>
<evidence type="ECO:0000269" key="17">
    <source ref="8"/>
</evidence>
<evidence type="ECO:0000303" key="18">
    <source>
    </source>
</evidence>
<evidence type="ECO:0000305" key="19"/>
<evidence type="ECO:0007829" key="20">
    <source>
        <dbReference type="PDB" id="6QD5"/>
    </source>
</evidence>
<accession>Q13336</accession>
<accession>A8K0P3</accession>
<accession>B3KR62</accession>
<accession>B3KVX3</accession>
<accession>C9EHF2</accession>
<accession>Q86VM5</accession>
<organism>
    <name type="scientific">Homo sapiens</name>
    <name type="common">Human</name>
    <dbReference type="NCBI Taxonomy" id="9606"/>
    <lineage>
        <taxon>Eukaryota</taxon>
        <taxon>Metazoa</taxon>
        <taxon>Chordata</taxon>
        <taxon>Craniata</taxon>
        <taxon>Vertebrata</taxon>
        <taxon>Euteleostomi</taxon>
        <taxon>Mammalia</taxon>
        <taxon>Eutheria</taxon>
        <taxon>Euarchontoglires</taxon>
        <taxon>Primates</taxon>
        <taxon>Haplorrhini</taxon>
        <taxon>Catarrhini</taxon>
        <taxon>Hominidae</taxon>
        <taxon>Homo</taxon>
    </lineage>
</organism>
<dbReference type="EMBL" id="L36121">
    <property type="status" value="NOT_ANNOTATED_CDS"/>
    <property type="molecule type" value="mRNA"/>
</dbReference>
<dbReference type="EMBL" id="U35735">
    <property type="protein sequence ID" value="AAB00181.1"/>
    <property type="molecule type" value="mRNA"/>
</dbReference>
<dbReference type="EMBL" id="Y19039">
    <property type="protein sequence ID" value="CAB60834.1"/>
    <property type="molecule type" value="mRNA"/>
</dbReference>
<dbReference type="EMBL" id="AK091064">
    <property type="protein sequence ID" value="BAG52274.1"/>
    <property type="molecule type" value="mRNA"/>
</dbReference>
<dbReference type="EMBL" id="AK123681">
    <property type="protein sequence ID" value="BAG53935.1"/>
    <property type="molecule type" value="mRNA"/>
</dbReference>
<dbReference type="EMBL" id="AK289608">
    <property type="protein sequence ID" value="BAF82297.1"/>
    <property type="molecule type" value="mRNA"/>
</dbReference>
<dbReference type="EMBL" id="AY942197">
    <property type="protein sequence ID" value="AAX20112.1"/>
    <property type="molecule type" value="Genomic_DNA"/>
</dbReference>
<dbReference type="EMBL" id="BC050539">
    <property type="protein sequence ID" value="AAH50539.1"/>
    <property type="molecule type" value="mRNA"/>
</dbReference>
<dbReference type="EMBL" id="GQ502682">
    <property type="protein sequence ID" value="ACV91713.1"/>
    <property type="molecule type" value="mRNA"/>
</dbReference>
<dbReference type="EMBL" id="EF571316">
    <property type="status" value="NOT_ANNOTATED_CDS"/>
    <property type="molecule type" value="Genomic_DNA"/>
</dbReference>
<dbReference type="EMBL" id="EF571317">
    <property type="status" value="NOT_ANNOTATED_CDS"/>
    <property type="molecule type" value="Genomic_DNA"/>
</dbReference>
<dbReference type="EMBL" id="EF571318">
    <property type="status" value="NOT_ANNOTATED_CDS"/>
    <property type="molecule type" value="Genomic_DNA"/>
</dbReference>
<dbReference type="CCDS" id="CCDS11925.1">
    <molecule id="Q13336-1"/>
</dbReference>
<dbReference type="CCDS" id="CCDS45860.1">
    <molecule id="Q13336-2"/>
</dbReference>
<dbReference type="PIR" id="A55662">
    <property type="entry name" value="A55662"/>
</dbReference>
<dbReference type="RefSeq" id="NP_001122060.3">
    <molecule id="Q13336-2"/>
    <property type="nucleotide sequence ID" value="NM_001128588.4"/>
</dbReference>
<dbReference type="RefSeq" id="NP_001139508.2">
    <molecule id="Q13336-1"/>
    <property type="nucleotide sequence ID" value="NM_001146036.3"/>
</dbReference>
<dbReference type="RefSeq" id="NP_001139509.1">
    <molecule id="Q13336-2"/>
    <property type="nucleotide sequence ID" value="NM_001146037.1"/>
</dbReference>
<dbReference type="RefSeq" id="NP_056949.4">
    <molecule id="Q13336-1"/>
    <property type="nucleotide sequence ID" value="NM_015865.7"/>
</dbReference>
<dbReference type="PDB" id="6QD5">
    <property type="method" value="X-ray"/>
    <property type="resolution" value="2.40 A"/>
    <property type="chains" value="A=31-389"/>
</dbReference>
<dbReference type="PDB" id="8BLP">
    <property type="method" value="EM"/>
    <property type="resolution" value="2.60 A"/>
    <property type="chains" value="A/B/C=31-389"/>
</dbReference>
<dbReference type="PDB" id="8XDF">
    <property type="method" value="EM"/>
    <property type="resolution" value="2.40 A"/>
    <property type="chains" value="A/B/C=1-389"/>
</dbReference>
<dbReference type="PDBsum" id="6QD5"/>
<dbReference type="PDBsum" id="8BLP"/>
<dbReference type="PDBsum" id="8XDF"/>
<dbReference type="EMDB" id="EMD-16112"/>
<dbReference type="SMR" id="Q13336"/>
<dbReference type="BioGRID" id="112451">
    <property type="interactions" value="40"/>
</dbReference>
<dbReference type="DIP" id="DIP-60049N"/>
<dbReference type="FunCoup" id="Q13336">
    <property type="interactions" value="418"/>
</dbReference>
<dbReference type="IntAct" id="Q13336">
    <property type="interactions" value="31"/>
</dbReference>
<dbReference type="MINT" id="Q13336"/>
<dbReference type="STRING" id="9606.ENSP00000390637"/>
<dbReference type="BindingDB" id="Q13336"/>
<dbReference type="ChEMBL" id="CHEMBL2390814"/>
<dbReference type="DrugBank" id="DB01005">
    <property type="generic name" value="Hydroxyurea"/>
</dbReference>
<dbReference type="DrugBank" id="DB03904">
    <property type="generic name" value="Urea"/>
</dbReference>
<dbReference type="GuidetoPHARMACOLOGY" id="982"/>
<dbReference type="TCDB" id="1.A.28.1.5">
    <property type="family name" value="the urea transporter (ut) family"/>
</dbReference>
<dbReference type="GlyCosmos" id="Q13336">
    <property type="glycosylation" value="1 site, No reported glycans"/>
</dbReference>
<dbReference type="GlyGen" id="Q13336">
    <property type="glycosylation" value="6 sites, 3 N-linked glycans (1 site)"/>
</dbReference>
<dbReference type="iPTMnet" id="Q13336"/>
<dbReference type="PhosphoSitePlus" id="Q13336"/>
<dbReference type="SwissPalm" id="Q13336"/>
<dbReference type="BioMuta" id="SLC14A1"/>
<dbReference type="DMDM" id="4033779"/>
<dbReference type="MassIVE" id="Q13336"/>
<dbReference type="PaxDb" id="9606-ENSP00000390637"/>
<dbReference type="PeptideAtlas" id="Q13336"/>
<dbReference type="ProteomicsDB" id="59327">
    <molecule id="Q13336-1"/>
</dbReference>
<dbReference type="ProteomicsDB" id="59328">
    <molecule id="Q13336-2"/>
</dbReference>
<dbReference type="Antibodypedia" id="22414">
    <property type="antibodies" value="162 antibodies from 26 providers"/>
</dbReference>
<dbReference type="DNASU" id="6563"/>
<dbReference type="Ensembl" id="ENST00000321925.9">
    <molecule id="Q13336-1"/>
    <property type="protein sequence ID" value="ENSP00000318546.4"/>
    <property type="gene ID" value="ENSG00000141469.18"/>
</dbReference>
<dbReference type="Ensembl" id="ENST00000415427.7">
    <molecule id="Q13336-2"/>
    <property type="protein sequence ID" value="ENSP00000412309.2"/>
    <property type="gene ID" value="ENSG00000141469.18"/>
</dbReference>
<dbReference type="Ensembl" id="ENST00000436407.7">
    <molecule id="Q13336-2"/>
    <property type="protein sequence ID" value="ENSP00000390637.2"/>
    <property type="gene ID" value="ENSG00000141469.18"/>
</dbReference>
<dbReference type="Ensembl" id="ENST00000586142.5">
    <molecule id="Q13336-1"/>
    <property type="protein sequence ID" value="ENSP00000470476.1"/>
    <property type="gene ID" value="ENSG00000141469.18"/>
</dbReference>
<dbReference type="Ensembl" id="ENST00000586951.6">
    <molecule id="Q13336-1"/>
    <property type="protein sequence ID" value="ENSP00000465702.2"/>
    <property type="gene ID" value="ENSG00000141469.18"/>
</dbReference>
<dbReference type="GeneID" id="6563"/>
<dbReference type="KEGG" id="hsa:6563"/>
<dbReference type="MANE-Select" id="ENST00000321925.9">
    <property type="protein sequence ID" value="ENSP00000318546.4"/>
    <property type="RefSeq nucleotide sequence ID" value="NM_015865.7"/>
    <property type="RefSeq protein sequence ID" value="NP_056949.4"/>
</dbReference>
<dbReference type="UCSC" id="uc002lbf.4">
    <molecule id="Q13336-1"/>
    <property type="organism name" value="human"/>
</dbReference>
<dbReference type="AGR" id="HGNC:10918"/>
<dbReference type="CTD" id="6563"/>
<dbReference type="DisGeNET" id="6563"/>
<dbReference type="GeneCards" id="SLC14A1"/>
<dbReference type="HGNC" id="HGNC:10918">
    <property type="gene designation" value="SLC14A1"/>
</dbReference>
<dbReference type="HPA" id="ENSG00000141469">
    <property type="expression patterns" value="Tissue enhanced (brain, prostate, urinary bladder)"/>
</dbReference>
<dbReference type="MalaCards" id="SLC14A1"/>
<dbReference type="MIM" id="111000">
    <property type="type" value="phenotype"/>
</dbReference>
<dbReference type="MIM" id="613868">
    <property type="type" value="gene"/>
</dbReference>
<dbReference type="neXtProt" id="NX_Q13336"/>
<dbReference type="OpenTargets" id="ENSG00000141469"/>
<dbReference type="PharmGKB" id="PA35810"/>
<dbReference type="VEuPathDB" id="HostDB:ENSG00000141469"/>
<dbReference type="eggNOG" id="ENOG502S2GD">
    <property type="taxonomic scope" value="Eukaryota"/>
</dbReference>
<dbReference type="GeneTree" id="ENSGT00390000018729"/>
<dbReference type="InParanoid" id="Q13336"/>
<dbReference type="OrthoDB" id="426293at2759"/>
<dbReference type="PAN-GO" id="Q13336">
    <property type="GO annotations" value="1 GO annotation based on evolutionary models"/>
</dbReference>
<dbReference type="PhylomeDB" id="Q13336"/>
<dbReference type="TreeFam" id="TF332858"/>
<dbReference type="PathwayCommons" id="Q13336"/>
<dbReference type="Reactome" id="R-HSA-425366">
    <property type="pathway name" value="Transport of bile salts and organic acids, metal ions and amine compounds"/>
</dbReference>
<dbReference type="SignaLink" id="Q13336"/>
<dbReference type="BioGRID-ORCS" id="6563">
    <property type="hits" value="9 hits in 1137 CRISPR screens"/>
</dbReference>
<dbReference type="ChiTaRS" id="SLC14A1">
    <property type="organism name" value="human"/>
</dbReference>
<dbReference type="GeneWiki" id="SLC14A1"/>
<dbReference type="GenomeRNAi" id="6563"/>
<dbReference type="Pharos" id="Q13336">
    <property type="development level" value="Tchem"/>
</dbReference>
<dbReference type="PRO" id="PR:Q13336"/>
<dbReference type="Proteomes" id="UP000005640">
    <property type="component" value="Chromosome 18"/>
</dbReference>
<dbReference type="RNAct" id="Q13336">
    <property type="molecule type" value="protein"/>
</dbReference>
<dbReference type="Bgee" id="ENSG00000141469">
    <property type="expression patterns" value="Expressed in tibia and 133 other cell types or tissues"/>
</dbReference>
<dbReference type="ExpressionAtlas" id="Q13336">
    <property type="expression patterns" value="baseline and differential"/>
</dbReference>
<dbReference type="GO" id="GO:0016323">
    <property type="term" value="C:basolateral plasma membrane"/>
    <property type="evidence" value="ECO:0000250"/>
    <property type="project" value="UniProtKB"/>
</dbReference>
<dbReference type="GO" id="GO:0005886">
    <property type="term" value="C:plasma membrane"/>
    <property type="evidence" value="ECO:0000314"/>
    <property type="project" value="HPA"/>
</dbReference>
<dbReference type="GO" id="GO:0015265">
    <property type="term" value="F:urea channel activity"/>
    <property type="evidence" value="ECO:0000314"/>
    <property type="project" value="UniProtKB"/>
</dbReference>
<dbReference type="GO" id="GO:0015204">
    <property type="term" value="F:urea transmembrane transporter activity"/>
    <property type="evidence" value="ECO:0000314"/>
    <property type="project" value="UniProtKB"/>
</dbReference>
<dbReference type="GO" id="GO:0005372">
    <property type="term" value="F:water transmembrane transporter activity"/>
    <property type="evidence" value="ECO:0007669"/>
    <property type="project" value="Ensembl"/>
</dbReference>
<dbReference type="GO" id="GO:0051649">
    <property type="term" value="P:establishment of localization in cell"/>
    <property type="evidence" value="ECO:0007669"/>
    <property type="project" value="Ensembl"/>
</dbReference>
<dbReference type="GO" id="GO:0055085">
    <property type="term" value="P:transmembrane transport"/>
    <property type="evidence" value="ECO:0000304"/>
    <property type="project" value="Reactome"/>
</dbReference>
<dbReference type="GO" id="GO:0071918">
    <property type="term" value="P:urea transmembrane transport"/>
    <property type="evidence" value="ECO:0000314"/>
    <property type="project" value="UniProtKB"/>
</dbReference>
<dbReference type="GO" id="GO:0015840">
    <property type="term" value="P:urea transport"/>
    <property type="evidence" value="ECO:0000304"/>
    <property type="project" value="ProtInc"/>
</dbReference>
<dbReference type="FunFam" id="1.10.3430.10:FF:000002">
    <property type="entry name" value="urea transporter 2"/>
    <property type="match status" value="1"/>
</dbReference>
<dbReference type="Gene3D" id="1.10.3430.10">
    <property type="entry name" value="Ammonium transporter AmtB like domains"/>
    <property type="match status" value="1"/>
</dbReference>
<dbReference type="InterPro" id="IPR029020">
    <property type="entry name" value="Ammonium/urea_transptr"/>
</dbReference>
<dbReference type="InterPro" id="IPR004937">
    <property type="entry name" value="Urea_transporter"/>
</dbReference>
<dbReference type="PANTHER" id="PTHR10464">
    <property type="entry name" value="UREA TRANSPORTER"/>
    <property type="match status" value="1"/>
</dbReference>
<dbReference type="PANTHER" id="PTHR10464:SF5">
    <property type="entry name" value="UREA TRANSPORTER 1"/>
    <property type="match status" value="1"/>
</dbReference>
<dbReference type="Pfam" id="PF03253">
    <property type="entry name" value="UT"/>
    <property type="match status" value="1"/>
</dbReference>
<dbReference type="PIRSF" id="PIRSF016502">
    <property type="entry name" value="Urea_transporter"/>
    <property type="match status" value="1"/>
</dbReference>
<sequence>MEDSPTMVRVDSPTMVRGENQVSPCQGRRCFPKALGYVTGDMKELANQLKDKPVVLQFIDWILRGISQVVFVNNPVSGILILVGLLVQNPWWALTGWLGTVVSTLMALLLSQDRSLIASGLYGYNATLVGVLMAVFSDKGDYFWWLLLPVCAMSMTCPIFSSALNSMLSKWDLPVFTLPFNMALSMYLSATGHYNPFFPAKLVIPITTAPNISWSDLSALELLKSIPVGVGQIYGCDNPWTGGIFLGAILLSSPLMCLHAAIGSLLGIAAGLSLSAPFEDIYFGLWGFNSSLACIAMGGMFMALTWQTHLLALGCALFTAYLGVGMANFMAEVGLPACTWPFCLATLLFLIMTTKNSNIYKMPLSKVTYPEENRIFYLQAKKRMVESPL</sequence>
<gene>
    <name type="primary">SLC14A1</name>
    <name type="synonym">HUT11</name>
    <name type="synonym">JK</name>
    <name type="synonym">RACH1</name>
    <name type="synonym">UT1</name>
    <name type="synonym">UTE</name>
</gene>